<feature type="chain" id="PRO_0000241698" description="Large ribosomal subunit protein uL24">
    <location>
        <begin position="1"/>
        <end position="120"/>
    </location>
</feature>
<feature type="region of interest" description="Disordered" evidence="2">
    <location>
        <begin position="1"/>
        <end position="33"/>
    </location>
</feature>
<feature type="compositionally biased region" description="Basic and acidic residues" evidence="2">
    <location>
        <begin position="10"/>
        <end position="22"/>
    </location>
</feature>
<protein>
    <recommendedName>
        <fullName evidence="1">Large ribosomal subunit protein uL24</fullName>
    </recommendedName>
    <alternativeName>
        <fullName evidence="3">50S ribosomal protein L24</fullName>
    </alternativeName>
</protein>
<organism>
    <name type="scientific">Natronomonas pharaonis (strain ATCC 35678 / DSM 2160 / CIP 103997 / JCM 8858 / NBRC 14720 / NCIMB 2260 / Gabara)</name>
    <name type="common">Halobacterium pharaonis</name>
    <dbReference type="NCBI Taxonomy" id="348780"/>
    <lineage>
        <taxon>Archaea</taxon>
        <taxon>Methanobacteriati</taxon>
        <taxon>Methanobacteriota</taxon>
        <taxon>Stenosarchaea group</taxon>
        <taxon>Halobacteria</taxon>
        <taxon>Halobacteriales</taxon>
        <taxon>Haloarculaceae</taxon>
        <taxon>Natronomonas</taxon>
    </lineage>
</organism>
<evidence type="ECO:0000255" key="1">
    <source>
        <dbReference type="HAMAP-Rule" id="MF_01326"/>
    </source>
</evidence>
<evidence type="ECO:0000256" key="2">
    <source>
        <dbReference type="SAM" id="MobiDB-lite"/>
    </source>
</evidence>
<evidence type="ECO:0000305" key="3"/>
<dbReference type="EMBL" id="CR936257">
    <property type="protein sequence ID" value="CAI50529.1"/>
    <property type="molecule type" value="Genomic_DNA"/>
</dbReference>
<dbReference type="RefSeq" id="WP_011324141.1">
    <property type="nucleotide sequence ID" value="NC_007426.1"/>
</dbReference>
<dbReference type="SMR" id="Q3IMX7"/>
<dbReference type="STRING" id="348780.NP_4876A"/>
<dbReference type="EnsemblBacteria" id="CAI50529">
    <property type="protein sequence ID" value="CAI50529"/>
    <property type="gene ID" value="NP_4876A"/>
</dbReference>
<dbReference type="GeneID" id="3703134"/>
<dbReference type="KEGG" id="nph:NP_4876A"/>
<dbReference type="eggNOG" id="arCOG04094">
    <property type="taxonomic scope" value="Archaea"/>
</dbReference>
<dbReference type="HOGENOM" id="CLU_093240_2_1_2"/>
<dbReference type="OrthoDB" id="10899at2157"/>
<dbReference type="Proteomes" id="UP000002698">
    <property type="component" value="Chromosome"/>
</dbReference>
<dbReference type="GO" id="GO:0015934">
    <property type="term" value="C:large ribosomal subunit"/>
    <property type="evidence" value="ECO:0007669"/>
    <property type="project" value="InterPro"/>
</dbReference>
<dbReference type="GO" id="GO:0019843">
    <property type="term" value="F:rRNA binding"/>
    <property type="evidence" value="ECO:0007669"/>
    <property type="project" value="UniProtKB-UniRule"/>
</dbReference>
<dbReference type="GO" id="GO:0003735">
    <property type="term" value="F:structural constituent of ribosome"/>
    <property type="evidence" value="ECO:0007669"/>
    <property type="project" value="InterPro"/>
</dbReference>
<dbReference type="GO" id="GO:0006412">
    <property type="term" value="P:translation"/>
    <property type="evidence" value="ECO:0007669"/>
    <property type="project" value="UniProtKB-UniRule"/>
</dbReference>
<dbReference type="CDD" id="cd06089">
    <property type="entry name" value="KOW_RPL26"/>
    <property type="match status" value="1"/>
</dbReference>
<dbReference type="Gene3D" id="2.30.30.30">
    <property type="match status" value="1"/>
</dbReference>
<dbReference type="HAMAP" id="MF_01326_A">
    <property type="entry name" value="Ribosomal_uL24_A"/>
    <property type="match status" value="1"/>
</dbReference>
<dbReference type="InterPro" id="IPR005824">
    <property type="entry name" value="KOW"/>
</dbReference>
<dbReference type="InterPro" id="IPR014722">
    <property type="entry name" value="Rib_uL2_dom2"/>
</dbReference>
<dbReference type="InterPro" id="IPR005756">
    <property type="entry name" value="Ribosomal_uL24_euk/arc"/>
</dbReference>
<dbReference type="InterPro" id="IPR041988">
    <property type="entry name" value="Ribosomal_uL24_KOW"/>
</dbReference>
<dbReference type="InterPro" id="IPR008991">
    <property type="entry name" value="Translation_prot_SH3-like_sf"/>
</dbReference>
<dbReference type="NCBIfam" id="TIGR01080">
    <property type="entry name" value="rplX_A_E"/>
    <property type="match status" value="1"/>
</dbReference>
<dbReference type="PANTHER" id="PTHR11143">
    <property type="entry name" value="60S RIBOSOMAL PROTEIN L26 FAMILY MEMBER"/>
    <property type="match status" value="1"/>
</dbReference>
<dbReference type="Pfam" id="PF00467">
    <property type="entry name" value="KOW"/>
    <property type="match status" value="1"/>
</dbReference>
<dbReference type="Pfam" id="PF16906">
    <property type="entry name" value="Ribosomal_L26"/>
    <property type="match status" value="1"/>
</dbReference>
<dbReference type="SUPFAM" id="SSF50104">
    <property type="entry name" value="Translation proteins SH3-like domain"/>
    <property type="match status" value="1"/>
</dbReference>
<gene>
    <name evidence="1" type="primary">rpl24</name>
    <name type="ordered locus">NP_4876A</name>
</gene>
<accession>Q3IMX7</accession>
<proteinExistence type="inferred from homology"/>
<sequence length="120" mass="13671">MTRQPHKQRNRQERAALHEKQKQVRAPLSPELREEYGQRNVRVNAGDTVEVQRGDFAGESGEVVTVDLRAAEIHVEDVTQETADGEEVPRPLEASNVQVTELDLEDEVREARLESEEDNE</sequence>
<keyword id="KW-1185">Reference proteome</keyword>
<keyword id="KW-0687">Ribonucleoprotein</keyword>
<keyword id="KW-0689">Ribosomal protein</keyword>
<keyword id="KW-0694">RNA-binding</keyword>
<keyword id="KW-0699">rRNA-binding</keyword>
<comment type="function">
    <text evidence="1">One of two assembly initiator proteins, it binds directly to the 5'-end of the 23S rRNA, where it nucleates assembly of the 50S subunit.</text>
</comment>
<comment type="function">
    <text evidence="1">Located at the polypeptide exit tunnel on the outside of the subunit.</text>
</comment>
<comment type="subunit">
    <text evidence="1">Part of the 50S ribosomal subunit.</text>
</comment>
<comment type="similarity">
    <text evidence="1">Belongs to the universal ribosomal protein uL24 family.</text>
</comment>
<reference key="1">
    <citation type="journal article" date="2005" name="Genome Res.">
        <title>Living with two extremes: conclusions from the genome sequence of Natronomonas pharaonis.</title>
        <authorList>
            <person name="Falb M."/>
            <person name="Pfeiffer F."/>
            <person name="Palm P."/>
            <person name="Rodewald K."/>
            <person name="Hickmann V."/>
            <person name="Tittor J."/>
            <person name="Oesterhelt D."/>
        </authorList>
    </citation>
    <scope>NUCLEOTIDE SEQUENCE [LARGE SCALE GENOMIC DNA]</scope>
    <source>
        <strain>ATCC 35678 / DSM 2160 / CIP 103997 / JCM 8858 / NBRC 14720 / NCIMB 2260 / Gabara</strain>
    </source>
</reference>
<name>RL24_NATPD</name>